<name>RRF_TREPS</name>
<organism>
    <name type="scientific">Treponema pallidum subsp. pallidum (strain SS14)</name>
    <dbReference type="NCBI Taxonomy" id="455434"/>
    <lineage>
        <taxon>Bacteria</taxon>
        <taxon>Pseudomonadati</taxon>
        <taxon>Spirochaetota</taxon>
        <taxon>Spirochaetia</taxon>
        <taxon>Spirochaetales</taxon>
        <taxon>Treponemataceae</taxon>
        <taxon>Treponema</taxon>
    </lineage>
</organism>
<accession>B2S3J4</accession>
<dbReference type="EMBL" id="CP000805">
    <property type="protein sequence ID" value="ACD71023.1"/>
    <property type="molecule type" value="Genomic_DNA"/>
</dbReference>
<dbReference type="RefSeq" id="WP_010882050.1">
    <property type="nucleotide sequence ID" value="NC_021508.1"/>
</dbReference>
<dbReference type="SMR" id="B2S3J4"/>
<dbReference type="GeneID" id="93876371"/>
<dbReference type="KEGG" id="tpp:TPASS_0604"/>
<dbReference type="PATRIC" id="fig|455434.6.peg.599"/>
<dbReference type="Proteomes" id="UP000001202">
    <property type="component" value="Chromosome"/>
</dbReference>
<dbReference type="GO" id="GO:0005737">
    <property type="term" value="C:cytoplasm"/>
    <property type="evidence" value="ECO:0007669"/>
    <property type="project" value="UniProtKB-SubCell"/>
</dbReference>
<dbReference type="GO" id="GO:0043023">
    <property type="term" value="F:ribosomal large subunit binding"/>
    <property type="evidence" value="ECO:0007669"/>
    <property type="project" value="TreeGrafter"/>
</dbReference>
<dbReference type="GO" id="GO:0006415">
    <property type="term" value="P:translational termination"/>
    <property type="evidence" value="ECO:0007669"/>
    <property type="project" value="UniProtKB-UniRule"/>
</dbReference>
<dbReference type="CDD" id="cd00520">
    <property type="entry name" value="RRF"/>
    <property type="match status" value="1"/>
</dbReference>
<dbReference type="FunFam" id="1.10.132.20:FF:000001">
    <property type="entry name" value="Ribosome-recycling factor"/>
    <property type="match status" value="1"/>
</dbReference>
<dbReference type="FunFam" id="3.30.1360.40:FF:000001">
    <property type="entry name" value="Ribosome-recycling factor"/>
    <property type="match status" value="1"/>
</dbReference>
<dbReference type="Gene3D" id="3.30.1360.40">
    <property type="match status" value="1"/>
</dbReference>
<dbReference type="Gene3D" id="1.10.132.20">
    <property type="entry name" value="Ribosome-recycling factor"/>
    <property type="match status" value="1"/>
</dbReference>
<dbReference type="HAMAP" id="MF_00040">
    <property type="entry name" value="RRF"/>
    <property type="match status" value="1"/>
</dbReference>
<dbReference type="InterPro" id="IPR002661">
    <property type="entry name" value="Ribosome_recyc_fac"/>
</dbReference>
<dbReference type="InterPro" id="IPR023584">
    <property type="entry name" value="Ribosome_recyc_fac_dom"/>
</dbReference>
<dbReference type="InterPro" id="IPR036191">
    <property type="entry name" value="RRF_sf"/>
</dbReference>
<dbReference type="NCBIfam" id="TIGR00496">
    <property type="entry name" value="frr"/>
    <property type="match status" value="1"/>
</dbReference>
<dbReference type="PANTHER" id="PTHR20982:SF3">
    <property type="entry name" value="MITOCHONDRIAL RIBOSOME RECYCLING FACTOR PSEUDO 1"/>
    <property type="match status" value="1"/>
</dbReference>
<dbReference type="PANTHER" id="PTHR20982">
    <property type="entry name" value="RIBOSOME RECYCLING FACTOR"/>
    <property type="match status" value="1"/>
</dbReference>
<dbReference type="Pfam" id="PF01765">
    <property type="entry name" value="RRF"/>
    <property type="match status" value="1"/>
</dbReference>
<dbReference type="SUPFAM" id="SSF55194">
    <property type="entry name" value="Ribosome recycling factor, RRF"/>
    <property type="match status" value="1"/>
</dbReference>
<sequence>MGIAECYEQKMKKSLSALQEGFNTLRTERATAHLLDQITVDYYQQPTALSQVATVSVPEARLIIIQPWDKTLLADIERAILKSKLSLNPSNDGKVIRLVIPPLTQERRKELVRQARALAEQARVAIRNIRREGIEEAKRGHKEGLLSEDALKAAEEAFQKATDASVADVARYLAEKEKDILEG</sequence>
<keyword id="KW-0963">Cytoplasm</keyword>
<keyword id="KW-0648">Protein biosynthesis</keyword>
<comment type="function">
    <text evidence="1">Responsible for the release of ribosomes from messenger RNA at the termination of protein biosynthesis. May increase the efficiency of translation by recycling ribosomes from one round of translation to another.</text>
</comment>
<comment type="subcellular location">
    <subcellularLocation>
        <location evidence="1">Cytoplasm</location>
    </subcellularLocation>
</comment>
<comment type="similarity">
    <text evidence="1">Belongs to the RRF family.</text>
</comment>
<evidence type="ECO:0000255" key="1">
    <source>
        <dbReference type="HAMAP-Rule" id="MF_00040"/>
    </source>
</evidence>
<proteinExistence type="inferred from homology"/>
<protein>
    <recommendedName>
        <fullName evidence="1">Ribosome-recycling factor</fullName>
        <shortName evidence="1">RRF</shortName>
    </recommendedName>
    <alternativeName>
        <fullName evidence="1">Ribosome-releasing factor</fullName>
    </alternativeName>
</protein>
<gene>
    <name evidence="1" type="primary">frr</name>
    <name type="ordered locus">TPASS_0604</name>
</gene>
<feature type="chain" id="PRO_1000090799" description="Ribosome-recycling factor">
    <location>
        <begin position="1"/>
        <end position="183"/>
    </location>
</feature>
<reference key="1">
    <citation type="journal article" date="2008" name="BMC Microbiol.">
        <title>Complete genome sequence of Treponema pallidum ssp. pallidum strain SS14 determined with oligonucleotide arrays.</title>
        <authorList>
            <person name="Matejkova P."/>
            <person name="Strouhal M."/>
            <person name="Smajs D."/>
            <person name="Norris S.J."/>
            <person name="Palzkill T."/>
            <person name="Petrosino J.F."/>
            <person name="Sodergren E."/>
            <person name="Norton J.E."/>
            <person name="Singh J."/>
            <person name="Richmond T.A."/>
            <person name="Molla M.N."/>
            <person name="Albert T.J."/>
            <person name="Weinstock G.M."/>
        </authorList>
    </citation>
    <scope>NUCLEOTIDE SEQUENCE [LARGE SCALE GENOMIC DNA]</scope>
    <source>
        <strain>SS14</strain>
    </source>
</reference>